<name>DCUP_XANCB</name>
<gene>
    <name evidence="1" type="primary">hemE</name>
    <name type="ordered locus">xcc-b100_1312</name>
</gene>
<feature type="chain" id="PRO_1000100025" description="Uroporphyrinogen decarboxylase">
    <location>
        <begin position="1"/>
        <end position="354"/>
    </location>
</feature>
<feature type="binding site" evidence="1">
    <location>
        <begin position="25"/>
        <end position="29"/>
    </location>
    <ligand>
        <name>substrate</name>
    </ligand>
</feature>
<feature type="binding site" evidence="1">
    <location>
        <position position="75"/>
    </location>
    <ligand>
        <name>substrate</name>
    </ligand>
</feature>
<feature type="binding site" evidence="1">
    <location>
        <position position="152"/>
    </location>
    <ligand>
        <name>substrate</name>
    </ligand>
</feature>
<feature type="binding site" evidence="1">
    <location>
        <position position="207"/>
    </location>
    <ligand>
        <name>substrate</name>
    </ligand>
</feature>
<feature type="binding site" evidence="1">
    <location>
        <position position="330"/>
    </location>
    <ligand>
        <name>substrate</name>
    </ligand>
</feature>
<feature type="site" description="Transition state stabilizer" evidence="1">
    <location>
        <position position="75"/>
    </location>
</feature>
<keyword id="KW-0963">Cytoplasm</keyword>
<keyword id="KW-0210">Decarboxylase</keyword>
<keyword id="KW-0456">Lyase</keyword>
<keyword id="KW-0627">Porphyrin biosynthesis</keyword>
<proteinExistence type="inferred from homology"/>
<protein>
    <recommendedName>
        <fullName evidence="1">Uroporphyrinogen decarboxylase</fullName>
        <shortName evidence="1">UPD</shortName>
        <shortName evidence="1">URO-D</shortName>
        <ecNumber evidence="1">4.1.1.37</ecNumber>
    </recommendedName>
</protein>
<sequence length="354" mass="38589">MLKNDRLLRALRRQPVDRTPVWLMRQAGRYLPEYRATRARAGSFLGMAKNPDIACEVTLQPLERFPLDAAILFSDILTIPDAMGLELYFVEGEGPKFRHPVRDADAIHRLGVPDMETELRYVMDAVRLIRRELDGAVPLIGFSGSPWTLACYMIEGGGSKEYARIKAMAFNAPQLLHHLLSTVTDAVIAYLSAQRAAGAQALQVFDTWGGVLSPAMYREFSLPYLTRIAQELERGSGEERTPLVLFGKGNGAYVSELAASGAEAVGVDWTISLADAAERAGGRVALQGNLDPATLYGSPDAIRSEVGKTLDSYAYGNGGSREGHVFNLGHGMSPDMNPDHVGVLVEAVQTLSKR</sequence>
<dbReference type="EC" id="4.1.1.37" evidence="1"/>
<dbReference type="EMBL" id="AM920689">
    <property type="protein sequence ID" value="CAP50662.1"/>
    <property type="molecule type" value="Genomic_DNA"/>
</dbReference>
<dbReference type="SMR" id="B0RQC7"/>
<dbReference type="KEGG" id="xca:xcc-b100_1312"/>
<dbReference type="HOGENOM" id="CLU_040933_0_0_6"/>
<dbReference type="UniPathway" id="UPA00251">
    <property type="reaction ID" value="UER00321"/>
</dbReference>
<dbReference type="Proteomes" id="UP000001188">
    <property type="component" value="Chromosome"/>
</dbReference>
<dbReference type="GO" id="GO:0005829">
    <property type="term" value="C:cytosol"/>
    <property type="evidence" value="ECO:0007669"/>
    <property type="project" value="TreeGrafter"/>
</dbReference>
<dbReference type="GO" id="GO:0004853">
    <property type="term" value="F:uroporphyrinogen decarboxylase activity"/>
    <property type="evidence" value="ECO:0007669"/>
    <property type="project" value="UniProtKB-UniRule"/>
</dbReference>
<dbReference type="GO" id="GO:0019353">
    <property type="term" value="P:protoporphyrinogen IX biosynthetic process from glutamate"/>
    <property type="evidence" value="ECO:0007669"/>
    <property type="project" value="TreeGrafter"/>
</dbReference>
<dbReference type="CDD" id="cd00717">
    <property type="entry name" value="URO-D"/>
    <property type="match status" value="1"/>
</dbReference>
<dbReference type="FunFam" id="3.20.20.210:FF:000001">
    <property type="entry name" value="Uroporphyrinogen decarboxylase"/>
    <property type="match status" value="1"/>
</dbReference>
<dbReference type="Gene3D" id="3.20.20.210">
    <property type="match status" value="1"/>
</dbReference>
<dbReference type="HAMAP" id="MF_00218">
    <property type="entry name" value="URO_D"/>
    <property type="match status" value="1"/>
</dbReference>
<dbReference type="InterPro" id="IPR038071">
    <property type="entry name" value="UROD/MetE-like_sf"/>
</dbReference>
<dbReference type="InterPro" id="IPR006361">
    <property type="entry name" value="Uroporphyrinogen_deCO2ase_HemE"/>
</dbReference>
<dbReference type="InterPro" id="IPR000257">
    <property type="entry name" value="Uroporphyrinogen_deCOase"/>
</dbReference>
<dbReference type="NCBIfam" id="TIGR01464">
    <property type="entry name" value="hemE"/>
    <property type="match status" value="1"/>
</dbReference>
<dbReference type="PANTHER" id="PTHR21091">
    <property type="entry name" value="METHYLTETRAHYDROFOLATE:HOMOCYSTEINE METHYLTRANSFERASE RELATED"/>
    <property type="match status" value="1"/>
</dbReference>
<dbReference type="PANTHER" id="PTHR21091:SF169">
    <property type="entry name" value="UROPORPHYRINOGEN DECARBOXYLASE"/>
    <property type="match status" value="1"/>
</dbReference>
<dbReference type="Pfam" id="PF01208">
    <property type="entry name" value="URO-D"/>
    <property type="match status" value="1"/>
</dbReference>
<dbReference type="SUPFAM" id="SSF51726">
    <property type="entry name" value="UROD/MetE-like"/>
    <property type="match status" value="1"/>
</dbReference>
<dbReference type="PROSITE" id="PS00906">
    <property type="entry name" value="UROD_1"/>
    <property type="match status" value="1"/>
</dbReference>
<dbReference type="PROSITE" id="PS00907">
    <property type="entry name" value="UROD_2"/>
    <property type="match status" value="1"/>
</dbReference>
<comment type="function">
    <text evidence="1">Catalyzes the decarboxylation of four acetate groups of uroporphyrinogen-III to yield coproporphyrinogen-III.</text>
</comment>
<comment type="catalytic activity">
    <reaction evidence="1">
        <text>uroporphyrinogen III + 4 H(+) = coproporphyrinogen III + 4 CO2</text>
        <dbReference type="Rhea" id="RHEA:19865"/>
        <dbReference type="ChEBI" id="CHEBI:15378"/>
        <dbReference type="ChEBI" id="CHEBI:16526"/>
        <dbReference type="ChEBI" id="CHEBI:57308"/>
        <dbReference type="ChEBI" id="CHEBI:57309"/>
        <dbReference type="EC" id="4.1.1.37"/>
    </reaction>
</comment>
<comment type="pathway">
    <text evidence="1">Porphyrin-containing compound metabolism; protoporphyrin-IX biosynthesis; coproporphyrinogen-III from 5-aminolevulinate: step 4/4.</text>
</comment>
<comment type="subunit">
    <text evidence="1">Homodimer.</text>
</comment>
<comment type="subcellular location">
    <subcellularLocation>
        <location evidence="1">Cytoplasm</location>
    </subcellularLocation>
</comment>
<comment type="similarity">
    <text evidence="1">Belongs to the uroporphyrinogen decarboxylase family.</text>
</comment>
<reference key="1">
    <citation type="journal article" date="2008" name="J. Biotechnol.">
        <title>The genome of Xanthomonas campestris pv. campestris B100 and its use for the reconstruction of metabolic pathways involved in xanthan biosynthesis.</title>
        <authorList>
            <person name="Vorhoelter F.-J."/>
            <person name="Schneiker S."/>
            <person name="Goesmann A."/>
            <person name="Krause L."/>
            <person name="Bekel T."/>
            <person name="Kaiser O."/>
            <person name="Linke B."/>
            <person name="Patschkowski T."/>
            <person name="Rueckert C."/>
            <person name="Schmid J."/>
            <person name="Sidhu V.K."/>
            <person name="Sieber V."/>
            <person name="Tauch A."/>
            <person name="Watt S.A."/>
            <person name="Weisshaar B."/>
            <person name="Becker A."/>
            <person name="Niehaus K."/>
            <person name="Puehler A."/>
        </authorList>
    </citation>
    <scope>NUCLEOTIDE SEQUENCE [LARGE SCALE GENOMIC DNA]</scope>
    <source>
        <strain>B100</strain>
    </source>
</reference>
<accession>B0RQC7</accession>
<evidence type="ECO:0000255" key="1">
    <source>
        <dbReference type="HAMAP-Rule" id="MF_00218"/>
    </source>
</evidence>
<organism>
    <name type="scientific">Xanthomonas campestris pv. campestris (strain B100)</name>
    <dbReference type="NCBI Taxonomy" id="509169"/>
    <lineage>
        <taxon>Bacteria</taxon>
        <taxon>Pseudomonadati</taxon>
        <taxon>Pseudomonadota</taxon>
        <taxon>Gammaproteobacteria</taxon>
        <taxon>Lysobacterales</taxon>
        <taxon>Lysobacteraceae</taxon>
        <taxon>Xanthomonas</taxon>
    </lineage>
</organism>